<evidence type="ECO:0000255" key="1">
    <source>
        <dbReference type="HAMAP-Rule" id="MF_00537"/>
    </source>
</evidence>
<evidence type="ECO:0000305" key="2"/>
<sequence length="101" mass="11564">MAKQSMKAREVKRVALADKFFAKRAELKAIISDVNASDEDRWNAVLKLQSLPRDSSPSRQRNRCRQTGRPHAFLRKFGLSRIKVREAAMRGEIPGLKKASW</sequence>
<feature type="chain" id="PRO_1000128397" description="Small ribosomal subunit protein uS14">
    <location>
        <begin position="1"/>
        <end position="101"/>
    </location>
</feature>
<organism>
    <name type="scientific">Enterobacter sp. (strain 638)</name>
    <dbReference type="NCBI Taxonomy" id="399742"/>
    <lineage>
        <taxon>Bacteria</taxon>
        <taxon>Pseudomonadati</taxon>
        <taxon>Pseudomonadota</taxon>
        <taxon>Gammaproteobacteria</taxon>
        <taxon>Enterobacterales</taxon>
        <taxon>Enterobacteriaceae</taxon>
        <taxon>Enterobacter</taxon>
    </lineage>
</organism>
<proteinExistence type="inferred from homology"/>
<dbReference type="EMBL" id="CP000653">
    <property type="protein sequence ID" value="ABP62395.1"/>
    <property type="molecule type" value="Genomic_DNA"/>
</dbReference>
<dbReference type="RefSeq" id="WP_015960709.1">
    <property type="nucleotide sequence ID" value="NC_009436.1"/>
</dbReference>
<dbReference type="SMR" id="A4WFB5"/>
<dbReference type="STRING" id="399742.Ent638_3738"/>
<dbReference type="GeneID" id="97603656"/>
<dbReference type="KEGG" id="ent:Ent638_3738"/>
<dbReference type="eggNOG" id="COG0199">
    <property type="taxonomic scope" value="Bacteria"/>
</dbReference>
<dbReference type="HOGENOM" id="CLU_139869_0_1_6"/>
<dbReference type="OrthoDB" id="9810484at2"/>
<dbReference type="Proteomes" id="UP000000230">
    <property type="component" value="Chromosome"/>
</dbReference>
<dbReference type="GO" id="GO:0005737">
    <property type="term" value="C:cytoplasm"/>
    <property type="evidence" value="ECO:0007669"/>
    <property type="project" value="UniProtKB-ARBA"/>
</dbReference>
<dbReference type="GO" id="GO:0015935">
    <property type="term" value="C:small ribosomal subunit"/>
    <property type="evidence" value="ECO:0007669"/>
    <property type="project" value="TreeGrafter"/>
</dbReference>
<dbReference type="GO" id="GO:0019843">
    <property type="term" value="F:rRNA binding"/>
    <property type="evidence" value="ECO:0007669"/>
    <property type="project" value="UniProtKB-UniRule"/>
</dbReference>
<dbReference type="GO" id="GO:0003735">
    <property type="term" value="F:structural constituent of ribosome"/>
    <property type="evidence" value="ECO:0007669"/>
    <property type="project" value="InterPro"/>
</dbReference>
<dbReference type="GO" id="GO:0006412">
    <property type="term" value="P:translation"/>
    <property type="evidence" value="ECO:0007669"/>
    <property type="project" value="UniProtKB-UniRule"/>
</dbReference>
<dbReference type="FunFam" id="1.10.287.1480:FF:000001">
    <property type="entry name" value="30S ribosomal protein S14"/>
    <property type="match status" value="1"/>
</dbReference>
<dbReference type="Gene3D" id="1.10.287.1480">
    <property type="match status" value="1"/>
</dbReference>
<dbReference type="HAMAP" id="MF_00537">
    <property type="entry name" value="Ribosomal_uS14_1"/>
    <property type="match status" value="1"/>
</dbReference>
<dbReference type="InterPro" id="IPR001209">
    <property type="entry name" value="Ribosomal_uS14"/>
</dbReference>
<dbReference type="InterPro" id="IPR023036">
    <property type="entry name" value="Ribosomal_uS14_bac/plastid"/>
</dbReference>
<dbReference type="InterPro" id="IPR018271">
    <property type="entry name" value="Ribosomal_uS14_CS"/>
</dbReference>
<dbReference type="NCBIfam" id="NF006477">
    <property type="entry name" value="PRK08881.1"/>
    <property type="match status" value="1"/>
</dbReference>
<dbReference type="PANTHER" id="PTHR19836">
    <property type="entry name" value="30S RIBOSOMAL PROTEIN S14"/>
    <property type="match status" value="1"/>
</dbReference>
<dbReference type="PANTHER" id="PTHR19836:SF19">
    <property type="entry name" value="SMALL RIBOSOMAL SUBUNIT PROTEIN US14M"/>
    <property type="match status" value="1"/>
</dbReference>
<dbReference type="Pfam" id="PF00253">
    <property type="entry name" value="Ribosomal_S14"/>
    <property type="match status" value="1"/>
</dbReference>
<dbReference type="SUPFAM" id="SSF57716">
    <property type="entry name" value="Glucocorticoid receptor-like (DNA-binding domain)"/>
    <property type="match status" value="1"/>
</dbReference>
<dbReference type="PROSITE" id="PS00527">
    <property type="entry name" value="RIBOSOMAL_S14"/>
    <property type="match status" value="1"/>
</dbReference>
<comment type="function">
    <text evidence="1">Binds 16S rRNA, required for the assembly of 30S particles and may also be responsible for determining the conformation of the 16S rRNA at the A site.</text>
</comment>
<comment type="subunit">
    <text evidence="1">Part of the 30S ribosomal subunit. Contacts proteins S3 and S10.</text>
</comment>
<comment type="similarity">
    <text evidence="1">Belongs to the universal ribosomal protein uS14 family.</text>
</comment>
<reference key="1">
    <citation type="journal article" date="2010" name="PLoS Genet.">
        <title>Genome sequence of the plant growth promoting endophytic bacterium Enterobacter sp. 638.</title>
        <authorList>
            <person name="Taghavi S."/>
            <person name="van der Lelie D."/>
            <person name="Hoffman A."/>
            <person name="Zhang Y.B."/>
            <person name="Walla M.D."/>
            <person name="Vangronsveld J."/>
            <person name="Newman L."/>
            <person name="Monchy S."/>
        </authorList>
    </citation>
    <scope>NUCLEOTIDE SEQUENCE [LARGE SCALE GENOMIC DNA]</scope>
    <source>
        <strain>638</strain>
    </source>
</reference>
<accession>A4WFB5</accession>
<gene>
    <name evidence="1" type="primary">rpsN</name>
    <name type="ordered locus">Ent638_3738</name>
</gene>
<keyword id="KW-0687">Ribonucleoprotein</keyword>
<keyword id="KW-0689">Ribosomal protein</keyword>
<keyword id="KW-0694">RNA-binding</keyword>
<keyword id="KW-0699">rRNA-binding</keyword>
<name>RS14_ENT38</name>
<protein>
    <recommendedName>
        <fullName evidence="1">Small ribosomal subunit protein uS14</fullName>
    </recommendedName>
    <alternativeName>
        <fullName evidence="2">30S ribosomal protein S14</fullName>
    </alternativeName>
</protein>